<proteinExistence type="inferred from homology"/>
<organism>
    <name type="scientific">Pseudomonas aeruginosa (strain LESB58)</name>
    <dbReference type="NCBI Taxonomy" id="557722"/>
    <lineage>
        <taxon>Bacteria</taxon>
        <taxon>Pseudomonadati</taxon>
        <taxon>Pseudomonadota</taxon>
        <taxon>Gammaproteobacteria</taxon>
        <taxon>Pseudomonadales</taxon>
        <taxon>Pseudomonadaceae</taxon>
        <taxon>Pseudomonas</taxon>
    </lineage>
</organism>
<evidence type="ECO:0000255" key="1">
    <source>
        <dbReference type="HAMAP-Rule" id="MF_00104"/>
    </source>
</evidence>
<reference key="1">
    <citation type="journal article" date="2009" name="Genome Res.">
        <title>Newly introduced genomic prophage islands are critical determinants of in vivo competitiveness in the Liverpool epidemic strain of Pseudomonas aeruginosa.</title>
        <authorList>
            <person name="Winstanley C."/>
            <person name="Langille M.G.I."/>
            <person name="Fothergill J.L."/>
            <person name="Kukavica-Ibrulj I."/>
            <person name="Paradis-Bleau C."/>
            <person name="Sanschagrin F."/>
            <person name="Thomson N.R."/>
            <person name="Winsor G.L."/>
            <person name="Quail M.A."/>
            <person name="Lennard N."/>
            <person name="Bignell A."/>
            <person name="Clarke L."/>
            <person name="Seeger K."/>
            <person name="Saunders D."/>
            <person name="Harris D."/>
            <person name="Parkhill J."/>
            <person name="Hancock R.E.W."/>
            <person name="Brinkman F.S.L."/>
            <person name="Levesque R.C."/>
        </authorList>
    </citation>
    <scope>NUCLEOTIDE SEQUENCE [LARGE SCALE GENOMIC DNA]</scope>
    <source>
        <strain>LESB58</strain>
    </source>
</reference>
<feature type="chain" id="PRO_1000194430" description="Ribonuclease 3">
    <location>
        <begin position="1"/>
        <end position="229"/>
    </location>
</feature>
<feature type="domain" description="RNase III" evidence="1">
    <location>
        <begin position="5"/>
        <end position="127"/>
    </location>
</feature>
<feature type="domain" description="DRBM" evidence="1">
    <location>
        <begin position="154"/>
        <end position="224"/>
    </location>
</feature>
<feature type="active site" evidence="1">
    <location>
        <position position="44"/>
    </location>
</feature>
<feature type="active site" evidence="1">
    <location>
        <position position="116"/>
    </location>
</feature>
<feature type="binding site" evidence="1">
    <location>
        <position position="40"/>
    </location>
    <ligand>
        <name>Mg(2+)</name>
        <dbReference type="ChEBI" id="CHEBI:18420"/>
    </ligand>
</feature>
<feature type="binding site" evidence="1">
    <location>
        <position position="113"/>
    </location>
    <ligand>
        <name>Mg(2+)</name>
        <dbReference type="ChEBI" id="CHEBI:18420"/>
    </ligand>
</feature>
<feature type="binding site" evidence="1">
    <location>
        <position position="116"/>
    </location>
    <ligand>
        <name>Mg(2+)</name>
        <dbReference type="ChEBI" id="CHEBI:18420"/>
    </ligand>
</feature>
<sequence>MSNSLDRLERKLGYTFKDRDLMVLALTHRSYAGRNNERLEFLGDAILNFVIGEALFHHFPQAREGQLSRLRARLVKGETLALLARGFEVGDYLRLGSGELKSGGFRRESILADAMEALIGAIYLDTGMDSARERIIAWLGPQLRELTPVDTNKDPKTRLQEFLQSRGCDLPRYEVVDIQGEPHCRTFFVDCEVALLSDKTHGHGGSRRIAEQVAAAAALVALGVENGHD</sequence>
<protein>
    <recommendedName>
        <fullName evidence="1">Ribonuclease 3</fullName>
        <ecNumber evidence="1">3.1.26.3</ecNumber>
    </recommendedName>
    <alternativeName>
        <fullName evidence="1">Ribonuclease III</fullName>
        <shortName evidence="1">RNase III</shortName>
    </alternativeName>
</protein>
<keyword id="KW-0963">Cytoplasm</keyword>
<keyword id="KW-0255">Endonuclease</keyword>
<keyword id="KW-0378">Hydrolase</keyword>
<keyword id="KW-0460">Magnesium</keyword>
<keyword id="KW-0479">Metal-binding</keyword>
<keyword id="KW-0507">mRNA processing</keyword>
<keyword id="KW-0540">Nuclease</keyword>
<keyword id="KW-0694">RNA-binding</keyword>
<keyword id="KW-0698">rRNA processing</keyword>
<keyword id="KW-0699">rRNA-binding</keyword>
<keyword id="KW-0819">tRNA processing</keyword>
<comment type="function">
    <text evidence="1">Digests double-stranded RNA. Involved in the processing of primary rRNA transcript to yield the immediate precursors to the large and small rRNAs (23S and 16S). Processes some mRNAs, and tRNAs when they are encoded in the rRNA operon. Processes pre-crRNA and tracrRNA of type II CRISPR loci if present in the organism.</text>
</comment>
<comment type="catalytic activity">
    <reaction evidence="1">
        <text>Endonucleolytic cleavage to 5'-phosphomonoester.</text>
        <dbReference type="EC" id="3.1.26.3"/>
    </reaction>
</comment>
<comment type="cofactor">
    <cofactor evidence="1">
        <name>Mg(2+)</name>
        <dbReference type="ChEBI" id="CHEBI:18420"/>
    </cofactor>
</comment>
<comment type="subunit">
    <text evidence="1">Homodimer.</text>
</comment>
<comment type="subcellular location">
    <subcellularLocation>
        <location evidence="1">Cytoplasm</location>
    </subcellularLocation>
</comment>
<comment type="similarity">
    <text evidence="1">Belongs to the ribonuclease III family.</text>
</comment>
<accession>B7UYX2</accession>
<gene>
    <name evidence="1" type="primary">rnc</name>
    <name type="ordered locus">PLES_45731</name>
</gene>
<name>RNC_PSEA8</name>
<dbReference type="EC" id="3.1.26.3" evidence="1"/>
<dbReference type="EMBL" id="FM209186">
    <property type="protein sequence ID" value="CAW29327.1"/>
    <property type="molecule type" value="Genomic_DNA"/>
</dbReference>
<dbReference type="RefSeq" id="WP_003085565.1">
    <property type="nucleotide sequence ID" value="NC_011770.1"/>
</dbReference>
<dbReference type="SMR" id="B7UYX2"/>
<dbReference type="KEGG" id="pag:PLES_45731"/>
<dbReference type="HOGENOM" id="CLU_000907_1_1_6"/>
<dbReference type="GO" id="GO:0005737">
    <property type="term" value="C:cytoplasm"/>
    <property type="evidence" value="ECO:0007669"/>
    <property type="project" value="UniProtKB-SubCell"/>
</dbReference>
<dbReference type="GO" id="GO:0003725">
    <property type="term" value="F:double-stranded RNA binding"/>
    <property type="evidence" value="ECO:0007669"/>
    <property type="project" value="TreeGrafter"/>
</dbReference>
<dbReference type="GO" id="GO:0046872">
    <property type="term" value="F:metal ion binding"/>
    <property type="evidence" value="ECO:0007669"/>
    <property type="project" value="UniProtKB-KW"/>
</dbReference>
<dbReference type="GO" id="GO:0004525">
    <property type="term" value="F:ribonuclease III activity"/>
    <property type="evidence" value="ECO:0007669"/>
    <property type="project" value="UniProtKB-UniRule"/>
</dbReference>
<dbReference type="GO" id="GO:0019843">
    <property type="term" value="F:rRNA binding"/>
    <property type="evidence" value="ECO:0007669"/>
    <property type="project" value="UniProtKB-KW"/>
</dbReference>
<dbReference type="GO" id="GO:0006397">
    <property type="term" value="P:mRNA processing"/>
    <property type="evidence" value="ECO:0007669"/>
    <property type="project" value="UniProtKB-UniRule"/>
</dbReference>
<dbReference type="GO" id="GO:0010468">
    <property type="term" value="P:regulation of gene expression"/>
    <property type="evidence" value="ECO:0007669"/>
    <property type="project" value="TreeGrafter"/>
</dbReference>
<dbReference type="GO" id="GO:0006364">
    <property type="term" value="P:rRNA processing"/>
    <property type="evidence" value="ECO:0007669"/>
    <property type="project" value="UniProtKB-UniRule"/>
</dbReference>
<dbReference type="GO" id="GO:0008033">
    <property type="term" value="P:tRNA processing"/>
    <property type="evidence" value="ECO:0007669"/>
    <property type="project" value="UniProtKB-KW"/>
</dbReference>
<dbReference type="CDD" id="cd10845">
    <property type="entry name" value="DSRM_RNAse_III_family"/>
    <property type="match status" value="1"/>
</dbReference>
<dbReference type="CDD" id="cd00593">
    <property type="entry name" value="RIBOc"/>
    <property type="match status" value="1"/>
</dbReference>
<dbReference type="FunFam" id="1.10.1520.10:FF:000001">
    <property type="entry name" value="Ribonuclease 3"/>
    <property type="match status" value="1"/>
</dbReference>
<dbReference type="FunFam" id="3.30.160.20:FF:000077">
    <property type="entry name" value="Ribonuclease 3"/>
    <property type="match status" value="1"/>
</dbReference>
<dbReference type="Gene3D" id="3.30.160.20">
    <property type="match status" value="1"/>
</dbReference>
<dbReference type="Gene3D" id="1.10.1520.10">
    <property type="entry name" value="Ribonuclease III domain"/>
    <property type="match status" value="1"/>
</dbReference>
<dbReference type="HAMAP" id="MF_00104">
    <property type="entry name" value="RNase_III"/>
    <property type="match status" value="1"/>
</dbReference>
<dbReference type="InterPro" id="IPR014720">
    <property type="entry name" value="dsRBD_dom"/>
</dbReference>
<dbReference type="InterPro" id="IPR011907">
    <property type="entry name" value="RNase_III"/>
</dbReference>
<dbReference type="InterPro" id="IPR000999">
    <property type="entry name" value="RNase_III_dom"/>
</dbReference>
<dbReference type="InterPro" id="IPR036389">
    <property type="entry name" value="RNase_III_sf"/>
</dbReference>
<dbReference type="NCBIfam" id="TIGR02191">
    <property type="entry name" value="RNaseIII"/>
    <property type="match status" value="1"/>
</dbReference>
<dbReference type="PANTHER" id="PTHR11207:SF0">
    <property type="entry name" value="RIBONUCLEASE 3"/>
    <property type="match status" value="1"/>
</dbReference>
<dbReference type="PANTHER" id="PTHR11207">
    <property type="entry name" value="RIBONUCLEASE III"/>
    <property type="match status" value="1"/>
</dbReference>
<dbReference type="Pfam" id="PF00035">
    <property type="entry name" value="dsrm"/>
    <property type="match status" value="1"/>
</dbReference>
<dbReference type="Pfam" id="PF14622">
    <property type="entry name" value="Ribonucleas_3_3"/>
    <property type="match status" value="1"/>
</dbReference>
<dbReference type="SMART" id="SM00358">
    <property type="entry name" value="DSRM"/>
    <property type="match status" value="1"/>
</dbReference>
<dbReference type="SMART" id="SM00535">
    <property type="entry name" value="RIBOc"/>
    <property type="match status" value="1"/>
</dbReference>
<dbReference type="SUPFAM" id="SSF54768">
    <property type="entry name" value="dsRNA-binding domain-like"/>
    <property type="match status" value="1"/>
</dbReference>
<dbReference type="SUPFAM" id="SSF69065">
    <property type="entry name" value="RNase III domain-like"/>
    <property type="match status" value="1"/>
</dbReference>
<dbReference type="PROSITE" id="PS50137">
    <property type="entry name" value="DS_RBD"/>
    <property type="match status" value="1"/>
</dbReference>
<dbReference type="PROSITE" id="PS00517">
    <property type="entry name" value="RNASE_3_1"/>
    <property type="match status" value="1"/>
</dbReference>
<dbReference type="PROSITE" id="PS50142">
    <property type="entry name" value="RNASE_3_2"/>
    <property type="match status" value="1"/>
</dbReference>